<gene>
    <name evidence="1" type="primary">gcvH</name>
    <name type="ordered locus">BC_4991</name>
</gene>
<proteinExistence type="inferred from homology"/>
<evidence type="ECO:0000255" key="1">
    <source>
        <dbReference type="HAMAP-Rule" id="MF_00272"/>
    </source>
</evidence>
<evidence type="ECO:0000255" key="2">
    <source>
        <dbReference type="PROSITE-ProRule" id="PRU01066"/>
    </source>
</evidence>
<keyword id="KW-0450">Lipoyl</keyword>
<keyword id="KW-1185">Reference proteome</keyword>
<dbReference type="EMBL" id="AE016877">
    <property type="protein sequence ID" value="AAP11863.1"/>
    <property type="molecule type" value="Genomic_DNA"/>
</dbReference>
<dbReference type="RefSeq" id="NP_834662.1">
    <property type="nucleotide sequence ID" value="NC_004722.1"/>
</dbReference>
<dbReference type="RefSeq" id="WP_000026897.1">
    <property type="nucleotide sequence ID" value="NZ_CP138336.1"/>
</dbReference>
<dbReference type="SMR" id="Q815Y3"/>
<dbReference type="STRING" id="226900.BC_4991"/>
<dbReference type="MetOSite" id="Q815Y3"/>
<dbReference type="KEGG" id="bce:BC4991"/>
<dbReference type="PATRIC" id="fig|226900.8.peg.5141"/>
<dbReference type="HOGENOM" id="CLU_097408_2_2_9"/>
<dbReference type="OrthoDB" id="9796712at2"/>
<dbReference type="Proteomes" id="UP000001417">
    <property type="component" value="Chromosome"/>
</dbReference>
<dbReference type="GO" id="GO:0005829">
    <property type="term" value="C:cytosol"/>
    <property type="evidence" value="ECO:0000318"/>
    <property type="project" value="GO_Central"/>
</dbReference>
<dbReference type="GO" id="GO:0005960">
    <property type="term" value="C:glycine cleavage complex"/>
    <property type="evidence" value="ECO:0007669"/>
    <property type="project" value="InterPro"/>
</dbReference>
<dbReference type="GO" id="GO:0019464">
    <property type="term" value="P:glycine decarboxylation via glycine cleavage system"/>
    <property type="evidence" value="ECO:0007669"/>
    <property type="project" value="UniProtKB-UniRule"/>
</dbReference>
<dbReference type="CDD" id="cd06848">
    <property type="entry name" value="GCS_H"/>
    <property type="match status" value="1"/>
</dbReference>
<dbReference type="Gene3D" id="2.40.50.100">
    <property type="match status" value="1"/>
</dbReference>
<dbReference type="HAMAP" id="MF_00272">
    <property type="entry name" value="GcvH"/>
    <property type="match status" value="1"/>
</dbReference>
<dbReference type="InterPro" id="IPR003016">
    <property type="entry name" value="2-oxoA_DH_lipoyl-BS"/>
</dbReference>
<dbReference type="InterPro" id="IPR000089">
    <property type="entry name" value="Biotin_lipoyl"/>
</dbReference>
<dbReference type="InterPro" id="IPR002930">
    <property type="entry name" value="GCV_H"/>
</dbReference>
<dbReference type="InterPro" id="IPR033753">
    <property type="entry name" value="GCV_H/Fam206"/>
</dbReference>
<dbReference type="InterPro" id="IPR017453">
    <property type="entry name" value="GCV_H_sub"/>
</dbReference>
<dbReference type="InterPro" id="IPR011053">
    <property type="entry name" value="Single_hybrid_motif"/>
</dbReference>
<dbReference type="NCBIfam" id="TIGR00527">
    <property type="entry name" value="gcvH"/>
    <property type="match status" value="1"/>
</dbReference>
<dbReference type="NCBIfam" id="NF002270">
    <property type="entry name" value="PRK01202.1"/>
    <property type="match status" value="1"/>
</dbReference>
<dbReference type="PANTHER" id="PTHR11715">
    <property type="entry name" value="GLYCINE CLEAVAGE SYSTEM H PROTEIN"/>
    <property type="match status" value="1"/>
</dbReference>
<dbReference type="PANTHER" id="PTHR11715:SF3">
    <property type="entry name" value="GLYCINE CLEAVAGE SYSTEM H PROTEIN-RELATED"/>
    <property type="match status" value="1"/>
</dbReference>
<dbReference type="Pfam" id="PF01597">
    <property type="entry name" value="GCV_H"/>
    <property type="match status" value="1"/>
</dbReference>
<dbReference type="SUPFAM" id="SSF51230">
    <property type="entry name" value="Single hybrid motif"/>
    <property type="match status" value="1"/>
</dbReference>
<dbReference type="PROSITE" id="PS50968">
    <property type="entry name" value="BIOTINYL_LIPOYL"/>
    <property type="match status" value="1"/>
</dbReference>
<dbReference type="PROSITE" id="PS00189">
    <property type="entry name" value="LIPOYL"/>
    <property type="match status" value="1"/>
</dbReference>
<feature type="chain" id="PRO_0000166203" description="Glycine cleavage system H protein">
    <location>
        <begin position="1"/>
        <end position="127"/>
    </location>
</feature>
<feature type="domain" description="Lipoyl-binding" evidence="2">
    <location>
        <begin position="22"/>
        <end position="104"/>
    </location>
</feature>
<feature type="modified residue" description="N6-lipoyllysine" evidence="1">
    <location>
        <position position="63"/>
    </location>
</feature>
<reference key="1">
    <citation type="journal article" date="2003" name="Nature">
        <title>Genome sequence of Bacillus cereus and comparative analysis with Bacillus anthracis.</title>
        <authorList>
            <person name="Ivanova N."/>
            <person name="Sorokin A."/>
            <person name="Anderson I."/>
            <person name="Galleron N."/>
            <person name="Candelon B."/>
            <person name="Kapatral V."/>
            <person name="Bhattacharyya A."/>
            <person name="Reznik G."/>
            <person name="Mikhailova N."/>
            <person name="Lapidus A."/>
            <person name="Chu L."/>
            <person name="Mazur M."/>
            <person name="Goltsman E."/>
            <person name="Larsen N."/>
            <person name="D'Souza M."/>
            <person name="Walunas T."/>
            <person name="Grechkin Y."/>
            <person name="Pusch G."/>
            <person name="Haselkorn R."/>
            <person name="Fonstein M."/>
            <person name="Ehrlich S.D."/>
            <person name="Overbeek R."/>
            <person name="Kyrpides N.C."/>
        </authorList>
    </citation>
    <scope>NUCLEOTIDE SEQUENCE [LARGE SCALE GENOMIC DNA]</scope>
    <source>
        <strain>ATCC 14579 / DSM 31 / CCUG 7414 / JCM 2152 / NBRC 15305 / NCIMB 9373 / NCTC 2599 / NRRL B-3711</strain>
    </source>
</reference>
<accession>Q815Y3</accession>
<comment type="function">
    <text evidence="1">The glycine cleavage system catalyzes the degradation of glycine. The H protein shuttles the methylamine group of glycine from the P protein to the T protein.</text>
</comment>
<comment type="function">
    <text evidence="1">Is also involved in protein lipoylation via its role as an octanoyl/lipoyl carrier protein intermediate.</text>
</comment>
<comment type="cofactor">
    <cofactor evidence="1">
        <name>(R)-lipoate</name>
        <dbReference type="ChEBI" id="CHEBI:83088"/>
    </cofactor>
    <text evidence="1">Binds 1 lipoyl cofactor covalently.</text>
</comment>
<comment type="subunit">
    <text evidence="1">The glycine cleavage system is composed of four proteins: P, T, L and H.</text>
</comment>
<comment type="similarity">
    <text evidence="1">Belongs to the GcvH family.</text>
</comment>
<organism>
    <name type="scientific">Bacillus cereus (strain ATCC 14579 / DSM 31 / CCUG 7414 / JCM 2152 / NBRC 15305 / NCIMB 9373 / NCTC 2599 / NRRL B-3711)</name>
    <dbReference type="NCBI Taxonomy" id="226900"/>
    <lineage>
        <taxon>Bacteria</taxon>
        <taxon>Bacillati</taxon>
        <taxon>Bacillota</taxon>
        <taxon>Bacilli</taxon>
        <taxon>Bacillales</taxon>
        <taxon>Bacillaceae</taxon>
        <taxon>Bacillus</taxon>
        <taxon>Bacillus cereus group</taxon>
    </lineage>
</organism>
<name>GCSH_BACCR</name>
<protein>
    <recommendedName>
        <fullName evidence="1">Glycine cleavage system H protein</fullName>
    </recommendedName>
    <alternativeName>
        <fullName evidence="1">Octanoyl/lipoyl carrier protein</fullName>
    </alternativeName>
</protein>
<sequence>MSIPNNLRYSEEHEWVKTEGNEVVIGITHFAQGELGDIVFVELPEVGATIEANEPFGSVESVKTVSELYAPVSGKVVAVNEELSDQPELVNESPYEGAWMVKVELSDASQVEKLLTAEKYAEMTNQD</sequence>